<organism>
    <name type="scientific">Streptococcus uberis (strain ATCC BAA-854 / 0140J)</name>
    <dbReference type="NCBI Taxonomy" id="218495"/>
    <lineage>
        <taxon>Bacteria</taxon>
        <taxon>Bacillati</taxon>
        <taxon>Bacillota</taxon>
        <taxon>Bacilli</taxon>
        <taxon>Lactobacillales</taxon>
        <taxon>Streptococcaceae</taxon>
        <taxon>Streptococcus</taxon>
    </lineage>
</organism>
<evidence type="ECO:0000255" key="1">
    <source>
        <dbReference type="HAMAP-Rule" id="MF_01346"/>
    </source>
</evidence>
<reference key="1">
    <citation type="journal article" date="2009" name="BMC Genomics">
        <title>Evidence for niche adaptation in the genome of the bovine pathogen Streptococcus uberis.</title>
        <authorList>
            <person name="Ward P.N."/>
            <person name="Holden M.T.G."/>
            <person name="Leigh J.A."/>
            <person name="Lennard N."/>
            <person name="Bignell A."/>
            <person name="Barron A."/>
            <person name="Clark L."/>
            <person name="Quail M.A."/>
            <person name="Woodward J."/>
            <person name="Barrell B.G."/>
            <person name="Egan S.A."/>
            <person name="Field T.R."/>
            <person name="Maskell D."/>
            <person name="Kehoe M."/>
            <person name="Dowson C.G."/>
            <person name="Chanter N."/>
            <person name="Whatmore A.M."/>
            <person name="Bentley S.D."/>
            <person name="Parkhill J."/>
        </authorList>
    </citation>
    <scope>NUCLEOTIDE SEQUENCE [LARGE SCALE GENOMIC DNA]</scope>
    <source>
        <strain>ATCC BAA-854 / 0140J</strain>
    </source>
</reference>
<name>ATPA_STRU0</name>
<comment type="function">
    <text evidence="1">Produces ATP from ADP in the presence of a proton gradient across the membrane. The alpha chain is a regulatory subunit.</text>
</comment>
<comment type="catalytic activity">
    <reaction evidence="1">
        <text>ATP + H2O + 4 H(+)(in) = ADP + phosphate + 5 H(+)(out)</text>
        <dbReference type="Rhea" id="RHEA:57720"/>
        <dbReference type="ChEBI" id="CHEBI:15377"/>
        <dbReference type="ChEBI" id="CHEBI:15378"/>
        <dbReference type="ChEBI" id="CHEBI:30616"/>
        <dbReference type="ChEBI" id="CHEBI:43474"/>
        <dbReference type="ChEBI" id="CHEBI:456216"/>
        <dbReference type="EC" id="7.1.2.2"/>
    </reaction>
</comment>
<comment type="subunit">
    <text evidence="1">F-type ATPases have 2 components, CF(1) - the catalytic core - and CF(0) - the membrane proton channel. CF(1) has five subunits: alpha(3), beta(3), gamma(1), delta(1), epsilon(1). CF(0) has three main subunits: a(1), b(2) and c(9-12). The alpha and beta chains form an alternating ring which encloses part of the gamma chain. CF(1) is attached to CF(0) by a central stalk formed by the gamma and epsilon chains, while a peripheral stalk is formed by the delta and b chains.</text>
</comment>
<comment type="subcellular location">
    <subcellularLocation>
        <location evidence="1">Cell membrane</location>
        <topology evidence="1">Peripheral membrane protein</topology>
    </subcellularLocation>
</comment>
<comment type="similarity">
    <text evidence="1">Belongs to the ATPase alpha/beta chains family.</text>
</comment>
<accession>B9DRT4</accession>
<protein>
    <recommendedName>
        <fullName evidence="1">ATP synthase subunit alpha</fullName>
        <ecNumber evidence="1">7.1.2.2</ecNumber>
    </recommendedName>
    <alternativeName>
        <fullName evidence="1">ATP synthase F1 sector subunit alpha</fullName>
    </alternativeName>
    <alternativeName>
        <fullName evidence="1">F-ATPase subunit alpha</fullName>
    </alternativeName>
</protein>
<keyword id="KW-0066">ATP synthesis</keyword>
<keyword id="KW-0067">ATP-binding</keyword>
<keyword id="KW-1003">Cell membrane</keyword>
<keyword id="KW-0139">CF(1)</keyword>
<keyword id="KW-0375">Hydrogen ion transport</keyword>
<keyword id="KW-0406">Ion transport</keyword>
<keyword id="KW-0472">Membrane</keyword>
<keyword id="KW-0547">Nucleotide-binding</keyword>
<keyword id="KW-1185">Reference proteome</keyword>
<keyword id="KW-1278">Translocase</keyword>
<keyword id="KW-0813">Transport</keyword>
<sequence>MAINAQEISALIKKQIENFQPNFDVTETGVVTYIGDGIARARGLDNAMSGELLEFSNGAFGMAQNLESNDVGIIILGEFSTIREGDVVKRTGKIMEVPVGEALIGRVVNPLGQPVDGLGDIATTGFRPVEAVAPGVMQRKSVSEPLQTGLKAIDALVPIGRGQRELIIGDRQTGKTSVAIDAILNQKGQDMICIYVAIGQKESTVRTQVETLRRYGALDYTIVVTASASQPSPLLFIAPYAGVAMAEEFMYQGKHVLIVYDDLSKQAVAYRELSLLLRRPPGREAYPGDVFYLHSRLLERSAKVSDDLGGGSITALPFIETQAGDISAYIATNVISITDGQIFLQESLFNSGIRPAIDAGSSVSRVGGSAQIKAMKKVAGTLRLDLASYRELEAFTQFGSDLDAATQAKLNRGRRTVEILKQPLHKPLPVEKQVVILYALTHGFLDDVPVNDILAFEEALYDYFDMHYSHLFETIRTTKDLPEEKDLDDAIKAFKDQANFN</sequence>
<gene>
    <name evidence="1" type="primary">atpA</name>
    <name type="ordered locus">SUB0670</name>
</gene>
<feature type="chain" id="PRO_1000166557" description="ATP synthase subunit alpha">
    <location>
        <begin position="1"/>
        <end position="501"/>
    </location>
</feature>
<feature type="binding site" evidence="1">
    <location>
        <begin position="169"/>
        <end position="176"/>
    </location>
    <ligand>
        <name>ATP</name>
        <dbReference type="ChEBI" id="CHEBI:30616"/>
    </ligand>
</feature>
<feature type="site" description="Required for activity" evidence="1">
    <location>
        <position position="362"/>
    </location>
</feature>
<dbReference type="EC" id="7.1.2.2" evidence="1"/>
<dbReference type="EMBL" id="AM946015">
    <property type="protein sequence ID" value="CAR41550.1"/>
    <property type="molecule type" value="Genomic_DNA"/>
</dbReference>
<dbReference type="RefSeq" id="WP_012658188.1">
    <property type="nucleotide sequence ID" value="NC_012004.1"/>
</dbReference>
<dbReference type="SMR" id="B9DRT4"/>
<dbReference type="STRING" id="218495.SUB0670"/>
<dbReference type="KEGG" id="sub:SUB0670"/>
<dbReference type="eggNOG" id="COG0056">
    <property type="taxonomic scope" value="Bacteria"/>
</dbReference>
<dbReference type="HOGENOM" id="CLU_010091_2_1_9"/>
<dbReference type="OrthoDB" id="9803053at2"/>
<dbReference type="Proteomes" id="UP000000449">
    <property type="component" value="Chromosome"/>
</dbReference>
<dbReference type="GO" id="GO:0005886">
    <property type="term" value="C:plasma membrane"/>
    <property type="evidence" value="ECO:0007669"/>
    <property type="project" value="UniProtKB-SubCell"/>
</dbReference>
<dbReference type="GO" id="GO:0045259">
    <property type="term" value="C:proton-transporting ATP synthase complex"/>
    <property type="evidence" value="ECO:0007669"/>
    <property type="project" value="UniProtKB-KW"/>
</dbReference>
<dbReference type="GO" id="GO:0043531">
    <property type="term" value="F:ADP binding"/>
    <property type="evidence" value="ECO:0007669"/>
    <property type="project" value="TreeGrafter"/>
</dbReference>
<dbReference type="GO" id="GO:0005524">
    <property type="term" value="F:ATP binding"/>
    <property type="evidence" value="ECO:0007669"/>
    <property type="project" value="UniProtKB-UniRule"/>
</dbReference>
<dbReference type="GO" id="GO:0046933">
    <property type="term" value="F:proton-transporting ATP synthase activity, rotational mechanism"/>
    <property type="evidence" value="ECO:0007669"/>
    <property type="project" value="UniProtKB-UniRule"/>
</dbReference>
<dbReference type="CDD" id="cd18113">
    <property type="entry name" value="ATP-synt_F1_alpha_C"/>
    <property type="match status" value="1"/>
</dbReference>
<dbReference type="CDD" id="cd18116">
    <property type="entry name" value="ATP-synt_F1_alpha_N"/>
    <property type="match status" value="1"/>
</dbReference>
<dbReference type="CDD" id="cd01132">
    <property type="entry name" value="F1-ATPase_alpha_CD"/>
    <property type="match status" value="1"/>
</dbReference>
<dbReference type="FunFam" id="1.20.150.20:FF:000001">
    <property type="entry name" value="ATP synthase subunit alpha"/>
    <property type="match status" value="1"/>
</dbReference>
<dbReference type="FunFam" id="2.40.30.20:FF:000001">
    <property type="entry name" value="ATP synthase subunit alpha"/>
    <property type="match status" value="1"/>
</dbReference>
<dbReference type="FunFam" id="3.40.50.300:FF:000002">
    <property type="entry name" value="ATP synthase subunit alpha"/>
    <property type="match status" value="1"/>
</dbReference>
<dbReference type="Gene3D" id="2.40.30.20">
    <property type="match status" value="1"/>
</dbReference>
<dbReference type="Gene3D" id="1.20.150.20">
    <property type="entry name" value="ATP synthase alpha/beta chain, C-terminal domain"/>
    <property type="match status" value="1"/>
</dbReference>
<dbReference type="Gene3D" id="3.40.50.300">
    <property type="entry name" value="P-loop containing nucleotide triphosphate hydrolases"/>
    <property type="match status" value="1"/>
</dbReference>
<dbReference type="HAMAP" id="MF_01346">
    <property type="entry name" value="ATP_synth_alpha_bact"/>
    <property type="match status" value="1"/>
</dbReference>
<dbReference type="InterPro" id="IPR023366">
    <property type="entry name" value="ATP_synth_asu-like_sf"/>
</dbReference>
<dbReference type="InterPro" id="IPR000793">
    <property type="entry name" value="ATP_synth_asu_C"/>
</dbReference>
<dbReference type="InterPro" id="IPR038376">
    <property type="entry name" value="ATP_synth_asu_C_sf"/>
</dbReference>
<dbReference type="InterPro" id="IPR033732">
    <property type="entry name" value="ATP_synth_F1_a_nt-bd_dom"/>
</dbReference>
<dbReference type="InterPro" id="IPR005294">
    <property type="entry name" value="ATP_synth_F1_asu"/>
</dbReference>
<dbReference type="InterPro" id="IPR004100">
    <property type="entry name" value="ATPase_F1/V1/A1_a/bsu_N"/>
</dbReference>
<dbReference type="InterPro" id="IPR036121">
    <property type="entry name" value="ATPase_F1/V1/A1_a/bsu_N_sf"/>
</dbReference>
<dbReference type="InterPro" id="IPR000194">
    <property type="entry name" value="ATPase_F1/V1/A1_a/bsu_nucl-bd"/>
</dbReference>
<dbReference type="InterPro" id="IPR027417">
    <property type="entry name" value="P-loop_NTPase"/>
</dbReference>
<dbReference type="NCBIfam" id="TIGR00962">
    <property type="entry name" value="atpA"/>
    <property type="match status" value="1"/>
</dbReference>
<dbReference type="NCBIfam" id="NF009884">
    <property type="entry name" value="PRK13343.1"/>
    <property type="match status" value="1"/>
</dbReference>
<dbReference type="PANTHER" id="PTHR48082">
    <property type="entry name" value="ATP SYNTHASE SUBUNIT ALPHA, MITOCHONDRIAL"/>
    <property type="match status" value="1"/>
</dbReference>
<dbReference type="PANTHER" id="PTHR48082:SF2">
    <property type="entry name" value="ATP SYNTHASE SUBUNIT ALPHA, MITOCHONDRIAL"/>
    <property type="match status" value="1"/>
</dbReference>
<dbReference type="Pfam" id="PF00006">
    <property type="entry name" value="ATP-synt_ab"/>
    <property type="match status" value="1"/>
</dbReference>
<dbReference type="Pfam" id="PF00306">
    <property type="entry name" value="ATP-synt_ab_C"/>
    <property type="match status" value="1"/>
</dbReference>
<dbReference type="Pfam" id="PF02874">
    <property type="entry name" value="ATP-synt_ab_N"/>
    <property type="match status" value="1"/>
</dbReference>
<dbReference type="PIRSF" id="PIRSF039088">
    <property type="entry name" value="F_ATPase_subunit_alpha"/>
    <property type="match status" value="1"/>
</dbReference>
<dbReference type="SUPFAM" id="SSF47917">
    <property type="entry name" value="C-terminal domain of alpha and beta subunits of F1 ATP synthase"/>
    <property type="match status" value="1"/>
</dbReference>
<dbReference type="SUPFAM" id="SSF50615">
    <property type="entry name" value="N-terminal domain of alpha and beta subunits of F1 ATP synthase"/>
    <property type="match status" value="1"/>
</dbReference>
<dbReference type="SUPFAM" id="SSF52540">
    <property type="entry name" value="P-loop containing nucleoside triphosphate hydrolases"/>
    <property type="match status" value="1"/>
</dbReference>
<proteinExistence type="inferred from homology"/>